<protein>
    <recommendedName>
        <fullName evidence="1">Uroporphyrinogen decarboxylase</fullName>
        <shortName evidence="1">UPD</shortName>
        <shortName evidence="1">URO-D</shortName>
        <ecNumber evidence="1">4.1.1.37</ecNumber>
    </recommendedName>
</protein>
<dbReference type="EC" id="4.1.1.37" evidence="1"/>
<dbReference type="EMBL" id="CP000266">
    <property type="protein sequence ID" value="ABF06062.1"/>
    <property type="molecule type" value="Genomic_DNA"/>
</dbReference>
<dbReference type="RefSeq" id="WP_000137636.1">
    <property type="nucleotide sequence ID" value="NC_008258.1"/>
</dbReference>
<dbReference type="SMR" id="Q0SY03"/>
<dbReference type="KEGG" id="sfv:SFV_4069"/>
<dbReference type="HOGENOM" id="CLU_040933_0_0_6"/>
<dbReference type="UniPathway" id="UPA00251">
    <property type="reaction ID" value="UER00321"/>
</dbReference>
<dbReference type="Proteomes" id="UP000000659">
    <property type="component" value="Chromosome"/>
</dbReference>
<dbReference type="GO" id="GO:0005829">
    <property type="term" value="C:cytosol"/>
    <property type="evidence" value="ECO:0007669"/>
    <property type="project" value="TreeGrafter"/>
</dbReference>
<dbReference type="GO" id="GO:0004853">
    <property type="term" value="F:uroporphyrinogen decarboxylase activity"/>
    <property type="evidence" value="ECO:0007669"/>
    <property type="project" value="UniProtKB-UniRule"/>
</dbReference>
<dbReference type="GO" id="GO:0019353">
    <property type="term" value="P:protoporphyrinogen IX biosynthetic process from glutamate"/>
    <property type="evidence" value="ECO:0007669"/>
    <property type="project" value="TreeGrafter"/>
</dbReference>
<dbReference type="CDD" id="cd00717">
    <property type="entry name" value="URO-D"/>
    <property type="match status" value="1"/>
</dbReference>
<dbReference type="FunFam" id="3.20.20.210:FF:000001">
    <property type="entry name" value="Uroporphyrinogen decarboxylase"/>
    <property type="match status" value="1"/>
</dbReference>
<dbReference type="Gene3D" id="3.20.20.210">
    <property type="match status" value="1"/>
</dbReference>
<dbReference type="HAMAP" id="MF_00218">
    <property type="entry name" value="URO_D"/>
    <property type="match status" value="1"/>
</dbReference>
<dbReference type="InterPro" id="IPR038071">
    <property type="entry name" value="UROD/MetE-like_sf"/>
</dbReference>
<dbReference type="InterPro" id="IPR006361">
    <property type="entry name" value="Uroporphyrinogen_deCO2ase_HemE"/>
</dbReference>
<dbReference type="InterPro" id="IPR000257">
    <property type="entry name" value="Uroporphyrinogen_deCOase"/>
</dbReference>
<dbReference type="NCBIfam" id="TIGR01464">
    <property type="entry name" value="hemE"/>
    <property type="match status" value="1"/>
</dbReference>
<dbReference type="PANTHER" id="PTHR21091">
    <property type="entry name" value="METHYLTETRAHYDROFOLATE:HOMOCYSTEINE METHYLTRANSFERASE RELATED"/>
    <property type="match status" value="1"/>
</dbReference>
<dbReference type="PANTHER" id="PTHR21091:SF169">
    <property type="entry name" value="UROPORPHYRINOGEN DECARBOXYLASE"/>
    <property type="match status" value="1"/>
</dbReference>
<dbReference type="Pfam" id="PF01208">
    <property type="entry name" value="URO-D"/>
    <property type="match status" value="1"/>
</dbReference>
<dbReference type="SUPFAM" id="SSF51726">
    <property type="entry name" value="UROD/MetE-like"/>
    <property type="match status" value="1"/>
</dbReference>
<dbReference type="PROSITE" id="PS00906">
    <property type="entry name" value="UROD_1"/>
    <property type="match status" value="1"/>
</dbReference>
<dbReference type="PROSITE" id="PS00907">
    <property type="entry name" value="UROD_2"/>
    <property type="match status" value="1"/>
</dbReference>
<name>DCUP_SHIF8</name>
<sequence length="354" mass="39229">MTELKNDRYLRALLRQPVDVTPVWMMRQAGRYLPEYKATRAQAGDFMSLCKNAELACEVTLQPLRRYPLDAAILFSDILTVPDAMGLGLYFEAGEGPRFTSPVTCKADVDKLPIPDPEDELGYVMNAVRTIRHELKGEVPLIGFSGSPWTLATYMVEGGSSKAFTVIKKMMYADPQALHALLDKLAKSVTLYLNAQIKAGAQAVMIFDTWGGVLTGRDYQQFSLYYMHKIVDGLLRENDGRRVPVTLFTKGGGQWLEAMAETGCDALGLDWTTDIADARRRVGNKVALQGNMDPSMLYAPPARIEEEVATILAGFGHGEGHVFNLGHGIHQDVPPEHAGVFVEAVHRLSEQYHR</sequence>
<organism>
    <name type="scientific">Shigella flexneri serotype 5b (strain 8401)</name>
    <dbReference type="NCBI Taxonomy" id="373384"/>
    <lineage>
        <taxon>Bacteria</taxon>
        <taxon>Pseudomonadati</taxon>
        <taxon>Pseudomonadota</taxon>
        <taxon>Gammaproteobacteria</taxon>
        <taxon>Enterobacterales</taxon>
        <taxon>Enterobacteriaceae</taxon>
        <taxon>Shigella</taxon>
    </lineage>
</organism>
<proteinExistence type="inferred from homology"/>
<keyword id="KW-0963">Cytoplasm</keyword>
<keyword id="KW-0210">Decarboxylase</keyword>
<keyword id="KW-0456">Lyase</keyword>
<keyword id="KW-0627">Porphyrin biosynthesis</keyword>
<comment type="function">
    <text evidence="1">Catalyzes the decarboxylation of four acetate groups of uroporphyrinogen-III to yield coproporphyrinogen-III.</text>
</comment>
<comment type="catalytic activity">
    <reaction evidence="1">
        <text>uroporphyrinogen III + 4 H(+) = coproporphyrinogen III + 4 CO2</text>
        <dbReference type="Rhea" id="RHEA:19865"/>
        <dbReference type="ChEBI" id="CHEBI:15378"/>
        <dbReference type="ChEBI" id="CHEBI:16526"/>
        <dbReference type="ChEBI" id="CHEBI:57308"/>
        <dbReference type="ChEBI" id="CHEBI:57309"/>
        <dbReference type="EC" id="4.1.1.37"/>
    </reaction>
</comment>
<comment type="pathway">
    <text evidence="1">Porphyrin-containing compound metabolism; protoporphyrin-IX biosynthesis; coproporphyrinogen-III from 5-aminolevulinate: step 4/4.</text>
</comment>
<comment type="subunit">
    <text evidence="1">Homodimer.</text>
</comment>
<comment type="subcellular location">
    <subcellularLocation>
        <location evidence="1">Cytoplasm</location>
    </subcellularLocation>
</comment>
<comment type="similarity">
    <text evidence="1">Belongs to the uroporphyrinogen decarboxylase family.</text>
</comment>
<feature type="chain" id="PRO_1000023979" description="Uroporphyrinogen decarboxylase">
    <location>
        <begin position="1"/>
        <end position="354"/>
    </location>
</feature>
<feature type="binding site" evidence="1">
    <location>
        <begin position="27"/>
        <end position="31"/>
    </location>
    <ligand>
        <name>substrate</name>
    </ligand>
</feature>
<feature type="binding site" evidence="1">
    <location>
        <position position="77"/>
    </location>
    <ligand>
        <name>substrate</name>
    </ligand>
</feature>
<feature type="binding site" evidence="1">
    <location>
        <position position="154"/>
    </location>
    <ligand>
        <name>substrate</name>
    </ligand>
</feature>
<feature type="binding site" evidence="1">
    <location>
        <position position="209"/>
    </location>
    <ligand>
        <name>substrate</name>
    </ligand>
</feature>
<feature type="binding site" evidence="1">
    <location>
        <position position="327"/>
    </location>
    <ligand>
        <name>substrate</name>
    </ligand>
</feature>
<feature type="site" description="Transition state stabilizer" evidence="1">
    <location>
        <position position="77"/>
    </location>
</feature>
<evidence type="ECO:0000255" key="1">
    <source>
        <dbReference type="HAMAP-Rule" id="MF_00218"/>
    </source>
</evidence>
<gene>
    <name evidence="1" type="primary">hemE</name>
    <name type="ordered locus">SFV_4069</name>
</gene>
<reference key="1">
    <citation type="journal article" date="2006" name="BMC Genomics">
        <title>Complete genome sequence of Shigella flexneri 5b and comparison with Shigella flexneri 2a.</title>
        <authorList>
            <person name="Nie H."/>
            <person name="Yang F."/>
            <person name="Zhang X."/>
            <person name="Yang J."/>
            <person name="Chen L."/>
            <person name="Wang J."/>
            <person name="Xiong Z."/>
            <person name="Peng J."/>
            <person name="Sun L."/>
            <person name="Dong J."/>
            <person name="Xue Y."/>
            <person name="Xu X."/>
            <person name="Chen S."/>
            <person name="Yao Z."/>
            <person name="Shen Y."/>
            <person name="Jin Q."/>
        </authorList>
    </citation>
    <scope>NUCLEOTIDE SEQUENCE [LARGE SCALE GENOMIC DNA]</scope>
    <source>
        <strain>8401</strain>
    </source>
</reference>
<accession>Q0SY03</accession>